<feature type="signal peptide" evidence="2">
    <location>
        <begin position="1"/>
        <end position="34"/>
    </location>
</feature>
<feature type="chain" id="PRO_0000021830" description="Neural proliferation differentiation and control protein 1">
    <location>
        <begin position="35"/>
        <end position="325"/>
    </location>
</feature>
<feature type="transmembrane region" description="Helical" evidence="2">
    <location>
        <begin position="182"/>
        <end position="202"/>
    </location>
</feature>
<feature type="region of interest" description="Disordered" evidence="3">
    <location>
        <begin position="138"/>
        <end position="175"/>
    </location>
</feature>
<feature type="region of interest" description="Disordered" evidence="3">
    <location>
        <begin position="266"/>
        <end position="290"/>
    </location>
</feature>
<feature type="compositionally biased region" description="Acidic residues" evidence="3">
    <location>
        <begin position="275"/>
        <end position="284"/>
    </location>
</feature>
<feature type="modified residue" description="Phosphoserine" evidence="5">
    <location>
        <position position="229"/>
    </location>
</feature>
<feature type="sequence conflict" description="In Ref. 1; AAF76225." evidence="4" ref="1">
    <original>H</original>
    <variation>Q</variation>
    <location>
        <position position="113"/>
    </location>
</feature>
<feature type="sequence conflict" description="In Ref. 2; AAK27328." evidence="4" ref="2">
    <original>L</original>
    <variation>M</variation>
    <location>
        <position position="159"/>
    </location>
</feature>
<feature type="sequence conflict" description="In Ref. 2; AAK27328." evidence="4" ref="2">
    <original>Q</original>
    <variation>H</variation>
    <location>
        <position position="210"/>
    </location>
</feature>
<feature type="sequence conflict" description="In Ref. 6; CAB43321." evidence="4" ref="6">
    <original>KADYATAKA</original>
    <variation>EGRLRHCEG</variation>
    <location>
        <begin position="218"/>
        <end position="226"/>
    </location>
</feature>
<feature type="sequence conflict" description="In Ref. 5; AAF82603." evidence="4" ref="5">
    <original>E</original>
    <variation>D</variation>
    <location>
        <position position="289"/>
    </location>
</feature>
<dbReference type="EMBL" id="AF272357">
    <property type="protein sequence ID" value="AAF76225.1"/>
    <property type="molecule type" value="mRNA"/>
</dbReference>
<dbReference type="EMBL" id="AF285836">
    <property type="protein sequence ID" value="AAK27328.1"/>
    <property type="molecule type" value="mRNA"/>
</dbReference>
<dbReference type="EMBL" id="AL807752">
    <property type="status" value="NOT_ANNOTATED_CDS"/>
    <property type="molecule type" value="Genomic_DNA"/>
</dbReference>
<dbReference type="EMBL" id="BC004217">
    <property type="protein sequence ID" value="AAH04217.1"/>
    <property type="molecule type" value="mRNA"/>
</dbReference>
<dbReference type="EMBL" id="AF283247">
    <property type="protein sequence ID" value="AAF82603.1"/>
    <property type="molecule type" value="mRNA"/>
</dbReference>
<dbReference type="EMBL" id="AL050221">
    <property type="protein sequence ID" value="CAB43321.1"/>
    <property type="molecule type" value="mRNA"/>
</dbReference>
<dbReference type="CCDS" id="CCDS7024.1"/>
<dbReference type="PIR" id="T08809">
    <property type="entry name" value="T08809"/>
</dbReference>
<dbReference type="RefSeq" id="NP_056207.3">
    <property type="nucleotide sequence ID" value="NM_015392.3"/>
</dbReference>
<dbReference type="SMR" id="Q9NQX5"/>
<dbReference type="BioGRID" id="121167">
    <property type="interactions" value="73"/>
</dbReference>
<dbReference type="FunCoup" id="Q9NQX5">
    <property type="interactions" value="529"/>
</dbReference>
<dbReference type="IntAct" id="Q9NQX5">
    <property type="interactions" value="51"/>
</dbReference>
<dbReference type="STRING" id="9606.ENSP00000360660"/>
<dbReference type="GlyCosmos" id="Q9NQX5">
    <property type="glycosylation" value="2 sites, 1 glycan"/>
</dbReference>
<dbReference type="GlyGen" id="Q9NQX5">
    <property type="glycosylation" value="10 sites, 2 O-linked glycans (7 sites)"/>
</dbReference>
<dbReference type="iPTMnet" id="Q9NQX5"/>
<dbReference type="PhosphoSitePlus" id="Q9NQX5"/>
<dbReference type="SwissPalm" id="Q9NQX5"/>
<dbReference type="BioMuta" id="NPDC1"/>
<dbReference type="DMDM" id="22261810"/>
<dbReference type="jPOST" id="Q9NQX5"/>
<dbReference type="MassIVE" id="Q9NQX5"/>
<dbReference type="PaxDb" id="9606-ENSP00000360660"/>
<dbReference type="PeptideAtlas" id="Q9NQX5"/>
<dbReference type="ProteomicsDB" id="82224"/>
<dbReference type="Pumba" id="Q9NQX5"/>
<dbReference type="Antibodypedia" id="2177">
    <property type="antibodies" value="118 antibodies from 24 providers"/>
</dbReference>
<dbReference type="DNASU" id="56654"/>
<dbReference type="Ensembl" id="ENST00000371601.5">
    <property type="protein sequence ID" value="ENSP00000360660.4"/>
    <property type="gene ID" value="ENSG00000107281.10"/>
</dbReference>
<dbReference type="GeneID" id="56654"/>
<dbReference type="KEGG" id="hsa:56654"/>
<dbReference type="MANE-Select" id="ENST00000371601.5">
    <property type="protein sequence ID" value="ENSP00000360660.4"/>
    <property type="RefSeq nucleotide sequence ID" value="NM_015392.4"/>
    <property type="RefSeq protein sequence ID" value="NP_056207.3"/>
</dbReference>
<dbReference type="UCSC" id="uc004ckt.3">
    <property type="organism name" value="human"/>
</dbReference>
<dbReference type="AGR" id="HGNC:7899"/>
<dbReference type="CTD" id="56654"/>
<dbReference type="DisGeNET" id="56654"/>
<dbReference type="GeneCards" id="NPDC1"/>
<dbReference type="HGNC" id="HGNC:7899">
    <property type="gene designation" value="NPDC1"/>
</dbReference>
<dbReference type="HPA" id="ENSG00000107281">
    <property type="expression patterns" value="Low tissue specificity"/>
</dbReference>
<dbReference type="MIM" id="605798">
    <property type="type" value="gene"/>
</dbReference>
<dbReference type="neXtProt" id="NX_Q9NQX5"/>
<dbReference type="OpenTargets" id="ENSG00000107281"/>
<dbReference type="PharmGKB" id="PA31701"/>
<dbReference type="VEuPathDB" id="HostDB:ENSG00000107281"/>
<dbReference type="eggNOG" id="KOG3884">
    <property type="taxonomic scope" value="Eukaryota"/>
</dbReference>
<dbReference type="GeneTree" id="ENSGT00440000038604"/>
<dbReference type="HOGENOM" id="CLU_058246_0_1_1"/>
<dbReference type="InParanoid" id="Q9NQX5"/>
<dbReference type="OMA" id="NDHVFII"/>
<dbReference type="OrthoDB" id="6270617at2759"/>
<dbReference type="PAN-GO" id="Q9NQX5">
    <property type="GO annotations" value="0 GO annotations based on evolutionary models"/>
</dbReference>
<dbReference type="PhylomeDB" id="Q9NQX5"/>
<dbReference type="TreeFam" id="TF318443"/>
<dbReference type="PathwayCommons" id="Q9NQX5"/>
<dbReference type="Reactome" id="R-HSA-198933">
    <property type="pathway name" value="Immunoregulatory interactions between a Lymphoid and a non-Lymphoid cell"/>
</dbReference>
<dbReference type="SignaLink" id="Q9NQX5"/>
<dbReference type="BioGRID-ORCS" id="56654">
    <property type="hits" value="27 hits in 1143 CRISPR screens"/>
</dbReference>
<dbReference type="ChiTaRS" id="NPDC1">
    <property type="organism name" value="human"/>
</dbReference>
<dbReference type="GeneWiki" id="NPDC1"/>
<dbReference type="GenomeRNAi" id="56654"/>
<dbReference type="Pharos" id="Q9NQX5">
    <property type="development level" value="Tbio"/>
</dbReference>
<dbReference type="PRO" id="PR:Q9NQX5"/>
<dbReference type="Proteomes" id="UP000005640">
    <property type="component" value="Chromosome 9"/>
</dbReference>
<dbReference type="RNAct" id="Q9NQX5">
    <property type="molecule type" value="protein"/>
</dbReference>
<dbReference type="Bgee" id="ENSG00000107281">
    <property type="expression patterns" value="Expressed in right hemisphere of cerebellum and 99 other cell types or tissues"/>
</dbReference>
<dbReference type="ExpressionAtlas" id="Q9NQX5">
    <property type="expression patterns" value="baseline and differential"/>
</dbReference>
<dbReference type="GO" id="GO:0005886">
    <property type="term" value="C:plasma membrane"/>
    <property type="evidence" value="ECO:0000304"/>
    <property type="project" value="Reactome"/>
</dbReference>
<dbReference type="InterPro" id="IPR009635">
    <property type="entry name" value="NPDC1"/>
</dbReference>
<dbReference type="PANTHER" id="PTHR23352:SF2">
    <property type="entry name" value="NEURAL PROLIFERATION DIFFERENTIATION AND CONTROL PROTEIN 1"/>
    <property type="match status" value="1"/>
</dbReference>
<dbReference type="PANTHER" id="PTHR23352">
    <property type="entry name" value="NEURAL PROLIFERATION DIFFERENTIATION AND CONTROL PROTEIN-1 NPDC-1 PROTEIN"/>
    <property type="match status" value="1"/>
</dbReference>
<dbReference type="Pfam" id="PF06809">
    <property type="entry name" value="NPDC1"/>
    <property type="match status" value="1"/>
</dbReference>
<proteinExistence type="evidence at protein level"/>
<reference key="1">
    <citation type="submission" date="2000-05" db="EMBL/GenBank/DDBJ databases">
        <authorList>
            <person name="Wistow G.J."/>
        </authorList>
    </citation>
    <scope>NUCLEOTIDE SEQUENCE [MRNA]</scope>
    <source>
        <tissue>Iris</tissue>
    </source>
</reference>
<reference key="2">
    <citation type="journal article" date="2001" name="Gene">
        <title>Characterization and tissue expression of a novel human gene npdc1.</title>
        <authorList>
            <person name="Qu X."/>
            <person name="Zhang C."/>
            <person name="Zhai Y."/>
            <person name="Xing G."/>
            <person name="Wei H."/>
            <person name="Yu Y."/>
            <person name="Wu S."/>
            <person name="He F."/>
        </authorList>
    </citation>
    <scope>NUCLEOTIDE SEQUENCE [MRNA]</scope>
    <source>
        <tissue>Fetal liver</tissue>
    </source>
</reference>
<reference key="3">
    <citation type="journal article" date="2004" name="Nature">
        <title>DNA sequence and analysis of human chromosome 9.</title>
        <authorList>
            <person name="Humphray S.J."/>
            <person name="Oliver K."/>
            <person name="Hunt A.R."/>
            <person name="Plumb R.W."/>
            <person name="Loveland J.E."/>
            <person name="Howe K.L."/>
            <person name="Andrews T.D."/>
            <person name="Searle S."/>
            <person name="Hunt S.E."/>
            <person name="Scott C.E."/>
            <person name="Jones M.C."/>
            <person name="Ainscough R."/>
            <person name="Almeida J.P."/>
            <person name="Ambrose K.D."/>
            <person name="Ashwell R.I.S."/>
            <person name="Babbage A.K."/>
            <person name="Babbage S."/>
            <person name="Bagguley C.L."/>
            <person name="Bailey J."/>
            <person name="Banerjee R."/>
            <person name="Barker D.J."/>
            <person name="Barlow K.F."/>
            <person name="Bates K."/>
            <person name="Beasley H."/>
            <person name="Beasley O."/>
            <person name="Bird C.P."/>
            <person name="Bray-Allen S."/>
            <person name="Brown A.J."/>
            <person name="Brown J.Y."/>
            <person name="Burford D."/>
            <person name="Burrill W."/>
            <person name="Burton J."/>
            <person name="Carder C."/>
            <person name="Carter N.P."/>
            <person name="Chapman J.C."/>
            <person name="Chen Y."/>
            <person name="Clarke G."/>
            <person name="Clark S.Y."/>
            <person name="Clee C.M."/>
            <person name="Clegg S."/>
            <person name="Collier R.E."/>
            <person name="Corby N."/>
            <person name="Crosier M."/>
            <person name="Cummings A.T."/>
            <person name="Davies J."/>
            <person name="Dhami P."/>
            <person name="Dunn M."/>
            <person name="Dutta I."/>
            <person name="Dyer L.W."/>
            <person name="Earthrowl M.E."/>
            <person name="Faulkner L."/>
            <person name="Fleming C.J."/>
            <person name="Frankish A."/>
            <person name="Frankland J.A."/>
            <person name="French L."/>
            <person name="Fricker D.G."/>
            <person name="Garner P."/>
            <person name="Garnett J."/>
            <person name="Ghori J."/>
            <person name="Gilbert J.G.R."/>
            <person name="Glison C."/>
            <person name="Grafham D.V."/>
            <person name="Gribble S."/>
            <person name="Griffiths C."/>
            <person name="Griffiths-Jones S."/>
            <person name="Grocock R."/>
            <person name="Guy J."/>
            <person name="Hall R.E."/>
            <person name="Hammond S."/>
            <person name="Harley J.L."/>
            <person name="Harrison E.S.I."/>
            <person name="Hart E.A."/>
            <person name="Heath P.D."/>
            <person name="Henderson C.D."/>
            <person name="Hopkins B.L."/>
            <person name="Howard P.J."/>
            <person name="Howden P.J."/>
            <person name="Huckle E."/>
            <person name="Johnson C."/>
            <person name="Johnson D."/>
            <person name="Joy A.A."/>
            <person name="Kay M."/>
            <person name="Keenan S."/>
            <person name="Kershaw J.K."/>
            <person name="Kimberley A.M."/>
            <person name="King A."/>
            <person name="Knights A."/>
            <person name="Laird G.K."/>
            <person name="Langford C."/>
            <person name="Lawlor S."/>
            <person name="Leongamornlert D.A."/>
            <person name="Leversha M."/>
            <person name="Lloyd C."/>
            <person name="Lloyd D.M."/>
            <person name="Lovell J."/>
            <person name="Martin S."/>
            <person name="Mashreghi-Mohammadi M."/>
            <person name="Matthews L."/>
            <person name="McLaren S."/>
            <person name="McLay K.E."/>
            <person name="McMurray A."/>
            <person name="Milne S."/>
            <person name="Nickerson T."/>
            <person name="Nisbett J."/>
            <person name="Nordsiek G."/>
            <person name="Pearce A.V."/>
            <person name="Peck A.I."/>
            <person name="Porter K.M."/>
            <person name="Pandian R."/>
            <person name="Pelan S."/>
            <person name="Phillimore B."/>
            <person name="Povey S."/>
            <person name="Ramsey Y."/>
            <person name="Rand V."/>
            <person name="Scharfe M."/>
            <person name="Sehra H.K."/>
            <person name="Shownkeen R."/>
            <person name="Sims S.K."/>
            <person name="Skuce C.D."/>
            <person name="Smith M."/>
            <person name="Steward C.A."/>
            <person name="Swarbreck D."/>
            <person name="Sycamore N."/>
            <person name="Tester J."/>
            <person name="Thorpe A."/>
            <person name="Tracey A."/>
            <person name="Tromans A."/>
            <person name="Thomas D.W."/>
            <person name="Wall M."/>
            <person name="Wallis J.M."/>
            <person name="West A.P."/>
            <person name="Whitehead S.L."/>
            <person name="Willey D.L."/>
            <person name="Williams S.A."/>
            <person name="Wilming L."/>
            <person name="Wray P.W."/>
            <person name="Young L."/>
            <person name="Ashurst J.L."/>
            <person name="Coulson A."/>
            <person name="Blocker H."/>
            <person name="Durbin R.M."/>
            <person name="Sulston J.E."/>
            <person name="Hubbard T."/>
            <person name="Jackson M.J."/>
            <person name="Bentley D.R."/>
            <person name="Beck S."/>
            <person name="Rogers J."/>
            <person name="Dunham I."/>
        </authorList>
    </citation>
    <scope>NUCLEOTIDE SEQUENCE [LARGE SCALE GENOMIC DNA]</scope>
</reference>
<reference key="4">
    <citation type="journal article" date="2004" name="Genome Res.">
        <title>The status, quality, and expansion of the NIH full-length cDNA project: the Mammalian Gene Collection (MGC).</title>
        <authorList>
            <consortium name="The MGC Project Team"/>
        </authorList>
    </citation>
    <scope>NUCLEOTIDE SEQUENCE [LARGE SCALE MRNA]</scope>
    <source>
        <tissue>Kidney</tissue>
    </source>
</reference>
<reference key="5">
    <citation type="submission" date="2000-06" db="EMBL/GenBank/DDBJ databases">
        <authorList>
            <person name="Evrard C."/>
            <person name="Apiou F."/>
            <person name="Dutrillaux B."/>
            <person name="Rouget P."/>
        </authorList>
    </citation>
    <scope>NUCLEOTIDE SEQUENCE [MRNA] OF 39-325</scope>
    <source>
        <tissue>Brain</tissue>
    </source>
</reference>
<reference key="6">
    <citation type="journal article" date="2007" name="BMC Genomics">
        <title>The full-ORF clone resource of the German cDNA consortium.</title>
        <authorList>
            <person name="Bechtel S."/>
            <person name="Rosenfelder H."/>
            <person name="Duda A."/>
            <person name="Schmidt C.P."/>
            <person name="Ernst U."/>
            <person name="Wellenreuther R."/>
            <person name="Mehrle A."/>
            <person name="Schuster C."/>
            <person name="Bahr A."/>
            <person name="Bloecker H."/>
            <person name="Heubner D."/>
            <person name="Hoerlein A."/>
            <person name="Michel G."/>
            <person name="Wedler H."/>
            <person name="Koehrer K."/>
            <person name="Ottenwaelder B."/>
            <person name="Poustka A."/>
            <person name="Wiemann S."/>
            <person name="Schupp I."/>
        </authorList>
    </citation>
    <scope>NUCLEOTIDE SEQUENCE [LARGE SCALE MRNA] OF 218-325</scope>
    <source>
        <tissue>Uterus</tissue>
    </source>
</reference>
<reference key="7">
    <citation type="journal article" date="2010" name="Sci. Signal.">
        <title>Quantitative phosphoproteomics reveals widespread full phosphorylation site occupancy during mitosis.</title>
        <authorList>
            <person name="Olsen J.V."/>
            <person name="Vermeulen M."/>
            <person name="Santamaria A."/>
            <person name="Kumar C."/>
            <person name="Miller M.L."/>
            <person name="Jensen L.J."/>
            <person name="Gnad F."/>
            <person name="Cox J."/>
            <person name="Jensen T.S."/>
            <person name="Nigg E.A."/>
            <person name="Brunak S."/>
            <person name="Mann M."/>
        </authorList>
    </citation>
    <scope>IDENTIFICATION BY MASS SPECTROMETRY [LARGE SCALE ANALYSIS]</scope>
    <source>
        <tissue>Cervix carcinoma</tissue>
    </source>
</reference>
<reference key="8">
    <citation type="journal article" date="2013" name="J. Proteome Res.">
        <title>Toward a comprehensive characterization of a human cancer cell phosphoproteome.</title>
        <authorList>
            <person name="Zhou H."/>
            <person name="Di Palma S."/>
            <person name="Preisinger C."/>
            <person name="Peng M."/>
            <person name="Polat A.N."/>
            <person name="Heck A.J."/>
            <person name="Mohammed S."/>
        </authorList>
    </citation>
    <scope>PHOSPHORYLATION [LARGE SCALE ANALYSIS] AT SER-229</scope>
    <scope>IDENTIFICATION BY MASS SPECTROMETRY [LARGE SCALE ANALYSIS]</scope>
    <source>
        <tissue>Cervix carcinoma</tissue>
    </source>
</reference>
<evidence type="ECO:0000250" key="1"/>
<evidence type="ECO:0000255" key="2"/>
<evidence type="ECO:0000256" key="3">
    <source>
        <dbReference type="SAM" id="MobiDB-lite"/>
    </source>
</evidence>
<evidence type="ECO:0000305" key="4"/>
<evidence type="ECO:0007744" key="5">
    <source>
    </source>
</evidence>
<organism>
    <name type="scientific">Homo sapiens</name>
    <name type="common">Human</name>
    <dbReference type="NCBI Taxonomy" id="9606"/>
    <lineage>
        <taxon>Eukaryota</taxon>
        <taxon>Metazoa</taxon>
        <taxon>Chordata</taxon>
        <taxon>Craniata</taxon>
        <taxon>Vertebrata</taxon>
        <taxon>Euteleostomi</taxon>
        <taxon>Mammalia</taxon>
        <taxon>Eutheria</taxon>
        <taxon>Euarchontoglires</taxon>
        <taxon>Primates</taxon>
        <taxon>Haplorrhini</taxon>
        <taxon>Catarrhini</taxon>
        <taxon>Hominidae</taxon>
        <taxon>Homo</taxon>
    </lineage>
</organism>
<keyword id="KW-0472">Membrane</keyword>
<keyword id="KW-0597">Phosphoprotein</keyword>
<keyword id="KW-1267">Proteomics identification</keyword>
<keyword id="KW-1185">Reference proteome</keyword>
<keyword id="KW-0732">Signal</keyword>
<keyword id="KW-0812">Transmembrane</keyword>
<keyword id="KW-1133">Transmembrane helix</keyword>
<accession>Q9NQX5</accession>
<accession>Q5SPY8</accession>
<accession>Q9BTD6</accession>
<accession>Q9BXT3</accession>
<accession>Q9NQS2</accession>
<accession>Q9Y434</accession>
<name>NPDC1_HUMAN</name>
<gene>
    <name type="primary">NPDC1</name>
</gene>
<protein>
    <recommendedName>
        <fullName>Neural proliferation differentiation and control protein 1</fullName>
        <shortName>NPDC-1</shortName>
    </recommendedName>
</protein>
<comment type="function">
    <text evidence="1">Suppresses oncogenic transformation in neural and non-neural cells and down-regulates neural cell proliferation. Might be involved in transcriptional regulation (By similarity).</text>
</comment>
<comment type="interaction">
    <interactant intactId="EBI-748927">
        <id>Q9NQX5</id>
    </interactant>
    <interactant intactId="EBI-3867333">
        <id>A8MQ03</id>
        <label>CYSRT1</label>
    </interactant>
    <organismsDiffer>false</organismsDiffer>
    <experiments>3</experiments>
</comment>
<comment type="interaction">
    <interactant intactId="EBI-748927">
        <id>Q9NQX5</id>
    </interactant>
    <interactant intactId="EBI-489887">
        <id>P50402</id>
        <label>EMD</label>
    </interactant>
    <organismsDiffer>false</organismsDiffer>
    <experiments>3</experiments>
</comment>
<comment type="interaction">
    <interactant intactId="EBI-748927">
        <id>Q9NQX5</id>
    </interactant>
    <interactant intactId="EBI-750641">
        <id>Q5TD97</id>
        <label>FHL5</label>
    </interactant>
    <organismsDiffer>false</organismsDiffer>
    <experiments>5</experiments>
</comment>
<comment type="interaction">
    <interactant intactId="EBI-748927">
        <id>Q9NQX5</id>
    </interactant>
    <interactant intactId="EBI-7060731">
        <id>P61978-2</id>
        <label>HNRNPK</label>
    </interactant>
    <organismsDiffer>false</organismsDiffer>
    <experiments>5</experiments>
</comment>
<comment type="interaction">
    <interactant intactId="EBI-748927">
        <id>Q9NQX5</id>
    </interactant>
    <interactant intactId="EBI-742808">
        <id>Q5VWX1</id>
        <label>KHDRBS2</label>
    </interactant>
    <organismsDiffer>false</organismsDiffer>
    <experiments>6</experiments>
</comment>
<comment type="interaction">
    <interactant intactId="EBI-748927">
        <id>Q9NQX5</id>
    </interactant>
    <interactant intactId="EBI-11959885">
        <id>Q07627</id>
        <label>KRTAP1-1</label>
    </interactant>
    <organismsDiffer>false</organismsDiffer>
    <experiments>3</experiments>
</comment>
<comment type="interaction">
    <interactant intactId="EBI-748927">
        <id>Q9NQX5</id>
    </interactant>
    <interactant intactId="EBI-11749135">
        <id>Q8IUG1</id>
        <label>KRTAP1-3</label>
    </interactant>
    <organismsDiffer>false</organismsDiffer>
    <experiments>3</experiments>
</comment>
<comment type="interaction">
    <interactant intactId="EBI-748927">
        <id>Q9NQX5</id>
    </interactant>
    <interactant intactId="EBI-10172150">
        <id>P60370</id>
        <label>KRTAP10-5</label>
    </interactant>
    <organismsDiffer>false</organismsDiffer>
    <experiments>3</experiments>
</comment>
<comment type="interaction">
    <interactant intactId="EBI-748927">
        <id>Q9NQX5</id>
    </interactant>
    <interactant intactId="EBI-12012928">
        <id>P60371</id>
        <label>KRTAP10-6</label>
    </interactant>
    <organismsDiffer>false</organismsDiffer>
    <experiments>3</experiments>
</comment>
<comment type="interaction">
    <interactant intactId="EBI-748927">
        <id>Q9NQX5</id>
    </interactant>
    <interactant intactId="EBI-10172290">
        <id>P60409</id>
        <label>KRTAP10-7</label>
    </interactant>
    <organismsDiffer>false</organismsDiffer>
    <experiments>6</experiments>
</comment>
<comment type="interaction">
    <interactant intactId="EBI-748927">
        <id>Q9NQX5</id>
    </interactant>
    <interactant intactId="EBI-10171774">
        <id>P60410</id>
        <label>KRTAP10-8</label>
    </interactant>
    <organismsDiffer>false</organismsDiffer>
    <experiments>3</experiments>
</comment>
<comment type="interaction">
    <interactant intactId="EBI-748927">
        <id>Q9NQX5</id>
    </interactant>
    <interactant intactId="EBI-10172052">
        <id>P60411</id>
        <label>KRTAP10-9</label>
    </interactant>
    <organismsDiffer>false</organismsDiffer>
    <experiments>6</experiments>
</comment>
<comment type="interaction">
    <interactant intactId="EBI-748927">
        <id>Q9NQX5</id>
    </interactant>
    <interactant intactId="EBI-10176379">
        <id>P59991</id>
        <label>KRTAP12-2</label>
    </interactant>
    <organismsDiffer>false</organismsDiffer>
    <experiments>3</experiments>
</comment>
<comment type="interaction">
    <interactant intactId="EBI-748927">
        <id>Q9NQX5</id>
    </interactant>
    <interactant intactId="EBI-11953334">
        <id>P60328</id>
        <label>KRTAP12-3</label>
    </interactant>
    <organismsDiffer>false</organismsDiffer>
    <experiments>3</experiments>
</comment>
<comment type="interaction">
    <interactant intactId="EBI-748927">
        <id>Q9NQX5</id>
    </interactant>
    <interactant intactId="EBI-14065470">
        <id>Q9BYR9</id>
        <label>KRTAP2-4</label>
    </interactant>
    <organismsDiffer>false</organismsDiffer>
    <experiments>3</experiments>
</comment>
<comment type="interaction">
    <interactant intactId="EBI-748927">
        <id>Q9NQX5</id>
    </interactant>
    <interactant intactId="EBI-34579671">
        <id>Q9BYQ7</id>
        <label>KRTAP4-1</label>
    </interactant>
    <organismsDiffer>false</organismsDiffer>
    <experiments>3</experiments>
</comment>
<comment type="interaction">
    <interactant intactId="EBI-748927">
        <id>Q9NQX5</id>
    </interactant>
    <interactant intactId="EBI-11958132">
        <id>Q9BYR3</id>
        <label>KRTAP4-4</label>
    </interactant>
    <organismsDiffer>false</organismsDiffer>
    <experiments>3</experiments>
</comment>
<comment type="interaction">
    <interactant intactId="EBI-748927">
        <id>Q9NQX5</id>
    </interactant>
    <interactant intactId="EBI-3958099">
        <id>P26371</id>
        <label>KRTAP5-9</label>
    </interactant>
    <organismsDiffer>false</organismsDiffer>
    <experiments>6</experiments>
</comment>
<comment type="interaction">
    <interactant intactId="EBI-748927">
        <id>Q9NQX5</id>
    </interactant>
    <interactant intactId="EBI-1043191">
        <id>Q9BYQ3</id>
        <label>KRTAP9-3</label>
    </interactant>
    <organismsDiffer>false</organismsDiffer>
    <experiments>3</experiments>
</comment>
<comment type="interaction">
    <interactant intactId="EBI-748927">
        <id>Q9NQX5</id>
    </interactant>
    <interactant intactId="EBI-3932027">
        <id>P21145</id>
        <label>MAL</label>
    </interactant>
    <organismsDiffer>false</organismsDiffer>
    <experiments>3</experiments>
</comment>
<comment type="interaction">
    <interactant intactId="EBI-748927">
        <id>Q9NQX5</id>
    </interactant>
    <interactant intactId="EBI-724076">
        <id>Q99750</id>
        <label>MDFI</label>
    </interactant>
    <organismsDiffer>false</organismsDiffer>
    <experiments>8</experiments>
</comment>
<comment type="interaction">
    <interactant intactId="EBI-748927">
        <id>Q9NQX5</id>
    </interactant>
    <interactant intactId="EBI-12070086">
        <id>Q5J8X5</id>
        <label>MS4A13</label>
    </interactant>
    <organismsDiffer>false</organismsDiffer>
    <experiments>3</experiments>
</comment>
<comment type="interaction">
    <interactant intactId="EBI-748927">
        <id>Q9NQX5</id>
    </interactant>
    <interactant intactId="EBI-945833">
        <id>Q7Z3S9</id>
        <label>NOTCH2NLA</label>
    </interactant>
    <organismsDiffer>false</organismsDiffer>
    <experiments>3</experiments>
</comment>
<comment type="interaction">
    <interactant intactId="EBI-748927">
        <id>Q9NQX5</id>
    </interactant>
    <interactant intactId="EBI-22310682">
        <id>P0DPK4</id>
        <label>NOTCH2NLC</label>
    </interactant>
    <organismsDiffer>false</organismsDiffer>
    <experiments>3</experiments>
</comment>
<comment type="interaction">
    <interactant intactId="EBI-748927">
        <id>Q9NQX5</id>
    </interactant>
    <interactant intactId="EBI-965833">
        <id>Q9UKJ1</id>
        <label>PILRA</label>
    </interactant>
    <organismsDiffer>false</organismsDiffer>
    <experiments>6</experiments>
</comment>
<comment type="interaction">
    <interactant intactId="EBI-748927">
        <id>Q9NQX5</id>
    </interactant>
    <interactant intactId="EBI-8642021">
        <id>Q15415</id>
        <label>RBMY1J</label>
    </interactant>
    <organismsDiffer>false</organismsDiffer>
    <experiments>3</experiments>
</comment>
<comment type="interaction">
    <interactant intactId="EBI-748927">
        <id>Q9NQX5</id>
    </interactant>
    <interactant intactId="EBI-10243654">
        <id>Q5BVD1</id>
        <label>TTMP</label>
    </interactant>
    <organismsDiffer>false</organismsDiffer>
    <experiments>3</experiments>
</comment>
<comment type="subcellular location">
    <subcellularLocation>
        <location evidence="4">Membrane</location>
        <topology evidence="4">Single-pass membrane protein</topology>
    </subcellularLocation>
</comment>
<comment type="tissue specificity">
    <text>Strongly expressed in adult brain; especially in hippocampus, frontal lobe and temporal lobe.</text>
</comment>
<comment type="similarity">
    <text evidence="4">Belongs to the NPDC1/cab-1 family.</text>
</comment>
<sequence length="325" mass="34516">MATPLPPPSPRHLRLLRLLLSGLVLGAALRGAAAGHPDVAACPGSLDCALKRRARCPPGAHACGPCLQPFQEDQQGLCVPRMRRPPGGGRPQPRLEDEIDFLAQELARKESGHSTPPLPKDRQRLPEPATLGFSARGQGLELGLPSTPGTPTPTPHTSLGSPVSSDPVHMSPLEPRGGQGDGLALVLILAFCVAGAAALSVASLCWCRLQREIRLTQKADYATAKAPGSPAAPRISPGDQRLAQSAEMYHYQHQRQQMLCLERHKEPPKELDTASSDEENEDGDFTVYECPGLAPTGEMEVRNPLFDHAALSAPLPAPSSPPALP</sequence>